<dbReference type="EC" id="1.8.1.9"/>
<dbReference type="EMBL" id="AE000657">
    <property type="protein sequence ID" value="AAC06756.1"/>
    <property type="molecule type" value="Genomic_DNA"/>
</dbReference>
<dbReference type="PIR" id="B70345">
    <property type="entry name" value="B70345"/>
</dbReference>
<dbReference type="RefSeq" id="NP_213350.1">
    <property type="nucleotide sequence ID" value="NC_000918.1"/>
</dbReference>
<dbReference type="RefSeq" id="WP_010880288.1">
    <property type="nucleotide sequence ID" value="NC_000918.1"/>
</dbReference>
<dbReference type="SMR" id="O66790"/>
<dbReference type="FunCoup" id="O66790">
    <property type="interactions" value="377"/>
</dbReference>
<dbReference type="STRING" id="224324.aq_500"/>
<dbReference type="EnsemblBacteria" id="AAC06756">
    <property type="protein sequence ID" value="AAC06756"/>
    <property type="gene ID" value="aq_500"/>
</dbReference>
<dbReference type="KEGG" id="aae:aq_500"/>
<dbReference type="PATRIC" id="fig|224324.8.peg.411"/>
<dbReference type="eggNOG" id="COG0492">
    <property type="taxonomic scope" value="Bacteria"/>
</dbReference>
<dbReference type="HOGENOM" id="CLU_031864_5_3_0"/>
<dbReference type="InParanoid" id="O66790"/>
<dbReference type="OrthoDB" id="9806179at2"/>
<dbReference type="Proteomes" id="UP000000798">
    <property type="component" value="Chromosome"/>
</dbReference>
<dbReference type="GO" id="GO:0005737">
    <property type="term" value="C:cytoplasm"/>
    <property type="evidence" value="ECO:0007669"/>
    <property type="project" value="UniProtKB-SubCell"/>
</dbReference>
<dbReference type="GO" id="GO:0004791">
    <property type="term" value="F:thioredoxin-disulfide reductase (NADPH) activity"/>
    <property type="evidence" value="ECO:0000318"/>
    <property type="project" value="GO_Central"/>
</dbReference>
<dbReference type="GO" id="GO:0045454">
    <property type="term" value="P:cell redox homeostasis"/>
    <property type="evidence" value="ECO:0000318"/>
    <property type="project" value="GO_Central"/>
</dbReference>
<dbReference type="GO" id="GO:0019430">
    <property type="term" value="P:removal of superoxide radicals"/>
    <property type="evidence" value="ECO:0007669"/>
    <property type="project" value="InterPro"/>
</dbReference>
<dbReference type="Gene3D" id="3.50.50.60">
    <property type="entry name" value="FAD/NAD(P)-binding domain"/>
    <property type="match status" value="2"/>
</dbReference>
<dbReference type="InterPro" id="IPR036188">
    <property type="entry name" value="FAD/NAD-bd_sf"/>
</dbReference>
<dbReference type="InterPro" id="IPR023753">
    <property type="entry name" value="FAD/NAD-binding_dom"/>
</dbReference>
<dbReference type="InterPro" id="IPR050097">
    <property type="entry name" value="Ferredoxin-NADP_redctase_2"/>
</dbReference>
<dbReference type="InterPro" id="IPR008255">
    <property type="entry name" value="Pyr_nucl-diS_OxRdtase_2_AS"/>
</dbReference>
<dbReference type="InterPro" id="IPR005982">
    <property type="entry name" value="Thioredox_Rdtase"/>
</dbReference>
<dbReference type="NCBIfam" id="TIGR01292">
    <property type="entry name" value="TRX_reduct"/>
    <property type="match status" value="1"/>
</dbReference>
<dbReference type="PANTHER" id="PTHR48105">
    <property type="entry name" value="THIOREDOXIN REDUCTASE 1-RELATED-RELATED"/>
    <property type="match status" value="1"/>
</dbReference>
<dbReference type="Pfam" id="PF07992">
    <property type="entry name" value="Pyr_redox_2"/>
    <property type="match status" value="1"/>
</dbReference>
<dbReference type="PRINTS" id="PR00368">
    <property type="entry name" value="FADPNR"/>
</dbReference>
<dbReference type="PRINTS" id="PR00469">
    <property type="entry name" value="PNDRDTASEII"/>
</dbReference>
<dbReference type="SUPFAM" id="SSF51905">
    <property type="entry name" value="FAD/NAD(P)-binding domain"/>
    <property type="match status" value="1"/>
</dbReference>
<dbReference type="PROSITE" id="PS00573">
    <property type="entry name" value="PYRIDINE_REDOX_2"/>
    <property type="match status" value="1"/>
</dbReference>
<gene>
    <name type="primary">trxB</name>
    <name type="ordered locus">aq_500</name>
</gene>
<accession>O66790</accession>
<proteinExistence type="inferred from homology"/>
<feature type="chain" id="PRO_0000166718" description="Thioredoxin reductase">
    <location>
        <begin position="1"/>
        <end position="323"/>
    </location>
</feature>
<feature type="binding site" evidence="2">
    <location>
        <begin position="42"/>
        <end position="49"/>
    </location>
    <ligand>
        <name>FAD</name>
        <dbReference type="ChEBI" id="CHEBI:57692"/>
    </ligand>
</feature>
<feature type="binding site" evidence="2">
    <location>
        <begin position="286"/>
        <end position="295"/>
    </location>
    <ligand>
        <name>FAD</name>
        <dbReference type="ChEBI" id="CHEBI:57692"/>
    </ligand>
</feature>
<feature type="disulfide bond" description="Redox-active" evidence="2">
    <location>
        <begin position="143"/>
        <end position="146"/>
    </location>
</feature>
<name>TRXB_AQUAE</name>
<evidence type="ECO:0000250" key="1"/>
<evidence type="ECO:0000250" key="2">
    <source>
        <dbReference type="UniProtKB" id="P0A9P4"/>
    </source>
</evidence>
<evidence type="ECO:0000305" key="3"/>
<reference key="1">
    <citation type="journal article" date="1998" name="Nature">
        <title>The complete genome of the hyperthermophilic bacterium Aquifex aeolicus.</title>
        <authorList>
            <person name="Deckert G."/>
            <person name="Warren P.V."/>
            <person name="Gaasterland T."/>
            <person name="Young W.G."/>
            <person name="Lenox A.L."/>
            <person name="Graham D.E."/>
            <person name="Overbeek R."/>
            <person name="Snead M.A."/>
            <person name="Keller M."/>
            <person name="Aujay M."/>
            <person name="Huber R."/>
            <person name="Feldman R.A."/>
            <person name="Short J.M."/>
            <person name="Olsen G.J."/>
            <person name="Swanson R.V."/>
        </authorList>
    </citation>
    <scope>NUCLEOTIDE SEQUENCE [LARGE SCALE GENOMIC DNA]</scope>
    <source>
        <strain>VF5</strain>
    </source>
</reference>
<keyword id="KW-0963">Cytoplasm</keyword>
<keyword id="KW-1015">Disulfide bond</keyword>
<keyword id="KW-0274">FAD</keyword>
<keyword id="KW-0285">Flavoprotein</keyword>
<keyword id="KW-0521">NADP</keyword>
<keyword id="KW-0560">Oxidoreductase</keyword>
<keyword id="KW-0676">Redox-active center</keyword>
<keyword id="KW-1185">Reference proteome</keyword>
<protein>
    <recommendedName>
        <fullName>Thioredoxin reductase</fullName>
        <shortName>TRXR</shortName>
        <ecNumber>1.8.1.9</ecNumber>
    </recommendedName>
</protein>
<sequence>MAVSLMQQPDKVYDVIIIGAGPAGTTAAIYTARAGWKTLVLYRAEADGALGVTQKIENYPGVPGPLSGYELLKIMREQAKSFGAEFVRGKVIATDLNSDPKKVYTIDGREFRGKTIIVASGAMERANKFKGEEEFLGRGVSYCGVCDAAFFKDQPVAVIGDDDYAIEEAEFIARFANKVFFVVPGSKIKAPPEVIEHFEKLPNVEILLRHRPIEIVGDQVVKGIKLKDLEKKEEKLLEVNGVFIFLGGTKPSVDFLMGQVEMTEGDCIVVNEEMMTSVPGVFAAGDVLCNEVKQAVVAAAMGCKAALAVDKFLSGKKKIVPQW</sequence>
<organism>
    <name type="scientific">Aquifex aeolicus (strain VF5)</name>
    <dbReference type="NCBI Taxonomy" id="224324"/>
    <lineage>
        <taxon>Bacteria</taxon>
        <taxon>Pseudomonadati</taxon>
        <taxon>Aquificota</taxon>
        <taxon>Aquificia</taxon>
        <taxon>Aquificales</taxon>
        <taxon>Aquificaceae</taxon>
        <taxon>Aquifex</taxon>
    </lineage>
</organism>
<comment type="catalytic activity">
    <reaction>
        <text>[thioredoxin]-dithiol + NADP(+) = [thioredoxin]-disulfide + NADPH + H(+)</text>
        <dbReference type="Rhea" id="RHEA:20345"/>
        <dbReference type="Rhea" id="RHEA-COMP:10698"/>
        <dbReference type="Rhea" id="RHEA-COMP:10700"/>
        <dbReference type="ChEBI" id="CHEBI:15378"/>
        <dbReference type="ChEBI" id="CHEBI:29950"/>
        <dbReference type="ChEBI" id="CHEBI:50058"/>
        <dbReference type="ChEBI" id="CHEBI:57783"/>
        <dbReference type="ChEBI" id="CHEBI:58349"/>
        <dbReference type="EC" id="1.8.1.9"/>
    </reaction>
</comment>
<comment type="cofactor">
    <cofactor evidence="2">
        <name>FAD</name>
        <dbReference type="ChEBI" id="CHEBI:57692"/>
    </cofactor>
    <text evidence="2">Binds 1 FAD per subunit.</text>
</comment>
<comment type="subunit">
    <text evidence="2">Homodimer.</text>
</comment>
<comment type="subcellular location">
    <subcellularLocation>
        <location evidence="1">Cytoplasm</location>
    </subcellularLocation>
</comment>
<comment type="miscellaneous">
    <text>The active site is a redox-active disulfide bond.</text>
</comment>
<comment type="similarity">
    <text evidence="3">Belongs to the class-II pyridine nucleotide-disulfide oxidoreductase family.</text>
</comment>